<gene>
    <name type="primary">YIPF4</name>
    <name type="ORF">RCJMB04_19b22</name>
</gene>
<proteinExistence type="evidence at transcript level"/>
<feature type="chain" id="PRO_0000242635" description="Protein YIPF4">
    <location>
        <begin position="1"/>
        <end position="249"/>
    </location>
</feature>
<feature type="topological domain" description="Cytoplasmic" evidence="1">
    <location>
        <begin position="1"/>
        <end position="116"/>
    </location>
</feature>
<feature type="transmembrane region" description="Helical" evidence="2">
    <location>
        <begin position="117"/>
        <end position="137"/>
    </location>
</feature>
<feature type="topological domain" description="Lumenal" evidence="4">
    <location>
        <position position="138"/>
    </location>
</feature>
<feature type="transmembrane region" description="Helical" evidence="2">
    <location>
        <begin position="139"/>
        <end position="159"/>
    </location>
</feature>
<feature type="topological domain" description="Cytoplasmic" evidence="4">
    <location>
        <begin position="160"/>
        <end position="171"/>
    </location>
</feature>
<feature type="transmembrane region" description="Helical" evidence="2">
    <location>
        <begin position="172"/>
        <end position="192"/>
    </location>
</feature>
<feature type="topological domain" description="Lumenal" evidence="4">
    <location>
        <begin position="193"/>
        <end position="200"/>
    </location>
</feature>
<feature type="transmembrane region" description="Helical" evidence="2">
    <location>
        <begin position="201"/>
        <end position="221"/>
    </location>
</feature>
<feature type="topological domain" description="Cytoplasmic" evidence="4">
    <location>
        <begin position="222"/>
        <end position="228"/>
    </location>
</feature>
<feature type="transmembrane region" description="Helical" evidence="2">
    <location>
        <begin position="229"/>
        <end position="249"/>
    </location>
</feature>
<feature type="region of interest" description="Disordered" evidence="3">
    <location>
        <begin position="1"/>
        <end position="40"/>
    </location>
</feature>
<feature type="compositionally biased region" description="Pro residues" evidence="3">
    <location>
        <begin position="1"/>
        <end position="15"/>
    </location>
</feature>
<feature type="compositionally biased region" description="Polar residues" evidence="3">
    <location>
        <begin position="16"/>
        <end position="26"/>
    </location>
</feature>
<protein>
    <recommendedName>
        <fullName>Protein YIPF4</fullName>
    </recommendedName>
    <alternativeName>
        <fullName>YIP1 family member 4</fullName>
    </alternativeName>
</protein>
<keyword id="KW-0333">Golgi apparatus</keyword>
<keyword id="KW-0472">Membrane</keyword>
<keyword id="KW-1185">Reference proteome</keyword>
<keyword id="KW-0812">Transmembrane</keyword>
<keyword id="KW-1133">Transmembrane helix</keyword>
<dbReference type="EMBL" id="AJ720497">
    <property type="protein sequence ID" value="CAG32156.1"/>
    <property type="molecule type" value="mRNA"/>
</dbReference>
<dbReference type="RefSeq" id="NP_001026229.1">
    <property type="nucleotide sequence ID" value="NM_001031058.1"/>
</dbReference>
<dbReference type="FunCoup" id="Q5ZJD7">
    <property type="interactions" value="1143"/>
</dbReference>
<dbReference type="STRING" id="9031.ENSGALP00000017145"/>
<dbReference type="PaxDb" id="9031-ENSGALP00000017145"/>
<dbReference type="Ensembl" id="ENSGALT00010023413.1">
    <property type="protein sequence ID" value="ENSGALP00010013523.1"/>
    <property type="gene ID" value="ENSGALG00010009798.1"/>
</dbReference>
<dbReference type="GeneID" id="421464"/>
<dbReference type="KEGG" id="gga:421464"/>
<dbReference type="CTD" id="84272"/>
<dbReference type="VEuPathDB" id="HostDB:geneid_421464"/>
<dbReference type="eggNOG" id="KOG3103">
    <property type="taxonomic scope" value="Eukaryota"/>
</dbReference>
<dbReference type="GeneTree" id="ENSGT00940000153168"/>
<dbReference type="HOGENOM" id="CLU_072083_0_0_1"/>
<dbReference type="InParanoid" id="Q5ZJD7"/>
<dbReference type="OMA" id="SWIITMW"/>
<dbReference type="OrthoDB" id="411251at2759"/>
<dbReference type="PhylomeDB" id="Q5ZJD7"/>
<dbReference type="TreeFam" id="TF315055"/>
<dbReference type="PRO" id="PR:Q5ZJD7"/>
<dbReference type="Proteomes" id="UP000000539">
    <property type="component" value="Chromosome 3"/>
</dbReference>
<dbReference type="Bgee" id="ENSGALG00000010547">
    <property type="expression patterns" value="Expressed in spermatocyte and 14 other cell types or tissues"/>
</dbReference>
<dbReference type="GO" id="GO:0005783">
    <property type="term" value="C:endoplasmic reticulum"/>
    <property type="evidence" value="ECO:0007669"/>
    <property type="project" value="Ensembl"/>
</dbReference>
<dbReference type="GO" id="GO:0005886">
    <property type="term" value="C:plasma membrane"/>
    <property type="evidence" value="ECO:0007669"/>
    <property type="project" value="Ensembl"/>
</dbReference>
<dbReference type="GO" id="GO:0005802">
    <property type="term" value="C:trans-Golgi network"/>
    <property type="evidence" value="ECO:0000318"/>
    <property type="project" value="GO_Central"/>
</dbReference>
<dbReference type="GO" id="GO:0006888">
    <property type="term" value="P:endoplasmic reticulum to Golgi vesicle-mediated transport"/>
    <property type="evidence" value="ECO:0000318"/>
    <property type="project" value="GO_Central"/>
</dbReference>
<dbReference type="GO" id="GO:0048280">
    <property type="term" value="P:vesicle fusion with Golgi apparatus"/>
    <property type="evidence" value="ECO:0000318"/>
    <property type="project" value="GO_Central"/>
</dbReference>
<dbReference type="InterPro" id="IPR045231">
    <property type="entry name" value="Yip1/4-like"/>
</dbReference>
<dbReference type="InterPro" id="IPR006977">
    <property type="entry name" value="Yip1_dom"/>
</dbReference>
<dbReference type="PANTHER" id="PTHR21236">
    <property type="entry name" value="GOLGI MEMBRANE PROTEIN YIP1"/>
    <property type="match status" value="1"/>
</dbReference>
<dbReference type="PANTHER" id="PTHR21236:SF7">
    <property type="entry name" value="PROTEIN YIPF4"/>
    <property type="match status" value="1"/>
</dbReference>
<dbReference type="Pfam" id="PF04893">
    <property type="entry name" value="Yip1"/>
    <property type="match status" value="1"/>
</dbReference>
<organism>
    <name type="scientific">Gallus gallus</name>
    <name type="common">Chicken</name>
    <dbReference type="NCBI Taxonomy" id="9031"/>
    <lineage>
        <taxon>Eukaryota</taxon>
        <taxon>Metazoa</taxon>
        <taxon>Chordata</taxon>
        <taxon>Craniata</taxon>
        <taxon>Vertebrata</taxon>
        <taxon>Euteleostomi</taxon>
        <taxon>Archelosauria</taxon>
        <taxon>Archosauria</taxon>
        <taxon>Dinosauria</taxon>
        <taxon>Saurischia</taxon>
        <taxon>Theropoda</taxon>
        <taxon>Coelurosauria</taxon>
        <taxon>Aves</taxon>
        <taxon>Neognathae</taxon>
        <taxon>Galloanserae</taxon>
        <taxon>Galliformes</taxon>
        <taxon>Phasianidae</taxon>
        <taxon>Phasianinae</taxon>
        <taxon>Gallus</taxon>
    </lineage>
</organism>
<accession>Q5ZJD7</accession>
<comment type="function">
    <text evidence="1">Involved in the maintenance of the Golgi structure.</text>
</comment>
<comment type="subcellular location">
    <subcellularLocation>
        <location evidence="1">Golgi apparatus</location>
        <location evidence="1">cis-Golgi network membrane</location>
        <topology>Multi-pass membrane protein</topology>
    </subcellularLocation>
</comment>
<comment type="similarity">
    <text evidence="4">Belongs to the YIP1 family.</text>
</comment>
<sequence length="249" mass="27699">MQPPGPQQPPPPPLFTPNNGDFTFVSSADAEDPSGSITTPDVKLNLGGEFIKESSATTFLRQRGYGWLLEVEDDDPEDNKPLLEELDIDLKDIYYKIRCVLMPMPSLGFNRQVVRDNPDFWGPLAVVLFFSMISLYGQFKVVSWIITIWIFGSLTIFLLARVLGGEVAYGQVLGVIGYSLLPLIVIAPVLLVVGSFEVVSTLIKLFGVFWAAYSAASLLVGEEFKTKKPLLIYPIFLLYIYFLSLYTGV</sequence>
<name>YIPF4_CHICK</name>
<reference key="1">
    <citation type="journal article" date="2005" name="Genome Biol.">
        <title>Full-length cDNAs from chicken bursal lymphocytes to facilitate gene function analysis.</title>
        <authorList>
            <person name="Caldwell R.B."/>
            <person name="Kierzek A.M."/>
            <person name="Arakawa H."/>
            <person name="Bezzubov Y."/>
            <person name="Zaim J."/>
            <person name="Fiedler P."/>
            <person name="Kutter S."/>
            <person name="Blagodatski A."/>
            <person name="Kostovska D."/>
            <person name="Koter M."/>
            <person name="Plachy J."/>
            <person name="Carninci P."/>
            <person name="Hayashizaki Y."/>
            <person name="Buerstedde J.-M."/>
        </authorList>
    </citation>
    <scope>NUCLEOTIDE SEQUENCE [LARGE SCALE MRNA]</scope>
    <source>
        <strain>CB</strain>
        <tissue>Bursa of Fabricius</tissue>
    </source>
</reference>
<evidence type="ECO:0000250" key="1">
    <source>
        <dbReference type="UniProtKB" id="Q9BSR8"/>
    </source>
</evidence>
<evidence type="ECO:0000255" key="2"/>
<evidence type="ECO:0000256" key="3">
    <source>
        <dbReference type="SAM" id="MobiDB-lite"/>
    </source>
</evidence>
<evidence type="ECO:0000305" key="4"/>